<reference key="1">
    <citation type="journal article" date="2000" name="DNA Res.">
        <title>Structural analysis of Arabidopsis thaliana chromosome 5. X. Sequence features of the regions of 3,076,755 bp covered by sixty P1 and TAC clones.</title>
        <authorList>
            <person name="Sato S."/>
            <person name="Nakamura Y."/>
            <person name="Kaneko T."/>
            <person name="Katoh T."/>
            <person name="Asamizu E."/>
            <person name="Kotani H."/>
            <person name="Tabata S."/>
        </authorList>
    </citation>
    <scope>NUCLEOTIDE SEQUENCE [LARGE SCALE GENOMIC DNA]</scope>
    <source>
        <strain>cv. Columbia</strain>
    </source>
</reference>
<reference key="2">
    <citation type="journal article" date="2017" name="Plant J.">
        <title>Araport11: a complete reannotation of the Arabidopsis thaliana reference genome.</title>
        <authorList>
            <person name="Cheng C.Y."/>
            <person name="Krishnakumar V."/>
            <person name="Chan A.P."/>
            <person name="Thibaud-Nissen F."/>
            <person name="Schobel S."/>
            <person name="Town C.D."/>
        </authorList>
    </citation>
    <scope>GENOME REANNOTATION</scope>
    <source>
        <strain>cv. Columbia</strain>
    </source>
</reference>
<reference key="3">
    <citation type="journal article" date="2002" name="Science">
        <title>Functional annotation of a full-length Arabidopsis cDNA collection.</title>
        <authorList>
            <person name="Seki M."/>
            <person name="Narusaka M."/>
            <person name="Kamiya A."/>
            <person name="Ishida J."/>
            <person name="Satou M."/>
            <person name="Sakurai T."/>
            <person name="Nakajima M."/>
            <person name="Enju A."/>
            <person name="Akiyama K."/>
            <person name="Oono Y."/>
            <person name="Muramatsu M."/>
            <person name="Hayashizaki Y."/>
            <person name="Kawai J."/>
            <person name="Carninci P."/>
            <person name="Itoh M."/>
            <person name="Ishii Y."/>
            <person name="Arakawa T."/>
            <person name="Shibata K."/>
            <person name="Shinagawa A."/>
            <person name="Shinozaki K."/>
        </authorList>
    </citation>
    <scope>NUCLEOTIDE SEQUENCE [LARGE SCALE MRNA]</scope>
    <source>
        <strain>cv. Columbia</strain>
    </source>
</reference>
<reference key="4">
    <citation type="journal article" date="2003" name="Science">
        <title>Empirical analysis of transcriptional activity in the Arabidopsis genome.</title>
        <authorList>
            <person name="Yamada K."/>
            <person name="Lim J."/>
            <person name="Dale J.M."/>
            <person name="Chen H."/>
            <person name="Shinn P."/>
            <person name="Palm C.J."/>
            <person name="Southwick A.M."/>
            <person name="Wu H.C."/>
            <person name="Kim C.J."/>
            <person name="Nguyen M."/>
            <person name="Pham P.K."/>
            <person name="Cheuk R.F."/>
            <person name="Karlin-Newmann G."/>
            <person name="Liu S.X."/>
            <person name="Lam B."/>
            <person name="Sakano H."/>
            <person name="Wu T."/>
            <person name="Yu G."/>
            <person name="Miranda M."/>
            <person name="Quach H.L."/>
            <person name="Tripp M."/>
            <person name="Chang C.H."/>
            <person name="Lee J.M."/>
            <person name="Toriumi M.J."/>
            <person name="Chan M.M."/>
            <person name="Tang C.C."/>
            <person name="Onodera C.S."/>
            <person name="Deng J.M."/>
            <person name="Akiyama K."/>
            <person name="Ansari Y."/>
            <person name="Arakawa T."/>
            <person name="Banh J."/>
            <person name="Banno F."/>
            <person name="Bowser L."/>
            <person name="Brooks S.Y."/>
            <person name="Carninci P."/>
            <person name="Chao Q."/>
            <person name="Choy N."/>
            <person name="Enju A."/>
            <person name="Goldsmith A.D."/>
            <person name="Gurjal M."/>
            <person name="Hansen N.F."/>
            <person name="Hayashizaki Y."/>
            <person name="Johnson-Hopson C."/>
            <person name="Hsuan V.W."/>
            <person name="Iida K."/>
            <person name="Karnes M."/>
            <person name="Khan S."/>
            <person name="Koesema E."/>
            <person name="Ishida J."/>
            <person name="Jiang P.X."/>
            <person name="Jones T."/>
            <person name="Kawai J."/>
            <person name="Kamiya A."/>
            <person name="Meyers C."/>
            <person name="Nakajima M."/>
            <person name="Narusaka M."/>
            <person name="Seki M."/>
            <person name="Sakurai T."/>
            <person name="Satou M."/>
            <person name="Tamse R."/>
            <person name="Vaysberg M."/>
            <person name="Wallender E.K."/>
            <person name="Wong C."/>
            <person name="Yamamura Y."/>
            <person name="Yuan S."/>
            <person name="Shinozaki K."/>
            <person name="Davis R.W."/>
            <person name="Theologis A."/>
            <person name="Ecker J.R."/>
        </authorList>
    </citation>
    <scope>NUCLEOTIDE SEQUENCE [LARGE SCALE MRNA]</scope>
    <source>
        <strain>cv. Columbia</strain>
    </source>
</reference>
<reference key="5">
    <citation type="submission" date="2002-03" db="EMBL/GenBank/DDBJ databases">
        <title>Full-length cDNA from Arabidopsis thaliana.</title>
        <authorList>
            <person name="Brover V.V."/>
            <person name="Troukhan M.E."/>
            <person name="Alexandrov N.A."/>
            <person name="Lu Y.-P."/>
            <person name="Flavell R.B."/>
            <person name="Feldmann K.A."/>
        </authorList>
    </citation>
    <scope>NUCLEOTIDE SEQUENCE [LARGE SCALE MRNA]</scope>
</reference>
<evidence type="ECO:0000250" key="1">
    <source>
        <dbReference type="UniProtKB" id="P32179"/>
    </source>
</evidence>
<evidence type="ECO:0000250" key="2">
    <source>
        <dbReference type="UniProtKB" id="Q42546"/>
    </source>
</evidence>
<evidence type="ECO:0000305" key="3"/>
<dbReference type="EC" id="3.1.3.7" evidence="2"/>
<dbReference type="EC" id="3.1.3.57" evidence="2"/>
<dbReference type="EMBL" id="AB019227">
    <property type="protein sequence ID" value="BAA96902.1"/>
    <property type="status" value="ALT_SEQ"/>
    <property type="molecule type" value="Genomic_DNA"/>
</dbReference>
<dbReference type="EMBL" id="CP002688">
    <property type="protein sequence ID" value="AED97827.1"/>
    <property type="molecule type" value="Genomic_DNA"/>
</dbReference>
<dbReference type="EMBL" id="AK117842">
    <property type="protein sequence ID" value="BAC42483.1"/>
    <property type="molecule type" value="mRNA"/>
</dbReference>
<dbReference type="EMBL" id="BT006247">
    <property type="protein sequence ID" value="AAP12896.1"/>
    <property type="molecule type" value="mRNA"/>
</dbReference>
<dbReference type="EMBL" id="AY088896">
    <property type="protein sequence ID" value="AAM67202.1"/>
    <property type="molecule type" value="mRNA"/>
</dbReference>
<dbReference type="RefSeq" id="NP_568983.1">
    <molecule id="Q8GY63-1"/>
    <property type="nucleotide sequence ID" value="NM_125795.5"/>
</dbReference>
<dbReference type="SMR" id="Q8GY63"/>
<dbReference type="FunCoup" id="Q8GY63">
    <property type="interactions" value="663"/>
</dbReference>
<dbReference type="STRING" id="3702.Q8GY63"/>
<dbReference type="PaxDb" id="3702-AT5G63990.1"/>
<dbReference type="ProteomicsDB" id="220403">
    <molecule id="Q8GY63-1"/>
</dbReference>
<dbReference type="EnsemblPlants" id="AT5G63990.1">
    <molecule id="Q8GY63-1"/>
    <property type="protein sequence ID" value="AT5G63990.1"/>
    <property type="gene ID" value="AT5G63990"/>
</dbReference>
<dbReference type="GeneID" id="836520"/>
<dbReference type="Gramene" id="AT5G63990.1">
    <molecule id="Q8GY63-1"/>
    <property type="protein sequence ID" value="AT5G63990.1"/>
    <property type="gene ID" value="AT5G63990"/>
</dbReference>
<dbReference type="KEGG" id="ath:AT5G63990"/>
<dbReference type="Araport" id="AT5G63990"/>
<dbReference type="TAIR" id="AT5G63990"/>
<dbReference type="eggNOG" id="KOG1528">
    <property type="taxonomic scope" value="Eukaryota"/>
</dbReference>
<dbReference type="HOGENOM" id="CLU_033446_2_1_1"/>
<dbReference type="InParanoid" id="Q8GY63"/>
<dbReference type="OMA" id="HCAGIDM"/>
<dbReference type="PhylomeDB" id="Q8GY63"/>
<dbReference type="BioCyc" id="ARA:AT5G63990-MONOMER"/>
<dbReference type="UniPathway" id="UPA00944"/>
<dbReference type="PRO" id="PR:Q8GY63"/>
<dbReference type="Proteomes" id="UP000006548">
    <property type="component" value="Chromosome 5"/>
</dbReference>
<dbReference type="ExpressionAtlas" id="Q8GY63">
    <property type="expression patterns" value="baseline and differential"/>
</dbReference>
<dbReference type="GO" id="GO:0008441">
    <property type="term" value="F:3'(2'),5'-bisphosphate nucleotidase activity"/>
    <property type="evidence" value="ECO:0007669"/>
    <property type="project" value="UniProtKB-EC"/>
</dbReference>
<dbReference type="GO" id="GO:0004441">
    <property type="term" value="F:inositol-1,4-bisphosphate 1-phosphatase activity"/>
    <property type="evidence" value="ECO:0007669"/>
    <property type="project" value="UniProtKB-EC"/>
</dbReference>
<dbReference type="GO" id="GO:0046872">
    <property type="term" value="F:metal ion binding"/>
    <property type="evidence" value="ECO:0007669"/>
    <property type="project" value="UniProtKB-KW"/>
</dbReference>
<dbReference type="GO" id="GO:0006790">
    <property type="term" value="P:sulfur compound metabolic process"/>
    <property type="evidence" value="ECO:0007669"/>
    <property type="project" value="InterPro"/>
</dbReference>
<dbReference type="CDD" id="cd01517">
    <property type="entry name" value="PAP_phosphatase"/>
    <property type="match status" value="1"/>
</dbReference>
<dbReference type="FunFam" id="3.40.190.80:FF:000003">
    <property type="entry name" value="PAP-specific phosphatase HAL2-like"/>
    <property type="match status" value="1"/>
</dbReference>
<dbReference type="FunFam" id="3.30.540.10:FF:000016">
    <property type="entry name" value="SAL1 phosphatase"/>
    <property type="match status" value="1"/>
</dbReference>
<dbReference type="Gene3D" id="3.40.190.80">
    <property type="match status" value="1"/>
</dbReference>
<dbReference type="Gene3D" id="3.30.540.10">
    <property type="entry name" value="Fructose-1,6-Bisphosphatase, subunit A, domain 1"/>
    <property type="match status" value="1"/>
</dbReference>
<dbReference type="InterPro" id="IPR006239">
    <property type="entry name" value="DPNP"/>
</dbReference>
<dbReference type="InterPro" id="IPR051090">
    <property type="entry name" value="Inositol_monoP_superfamily"/>
</dbReference>
<dbReference type="InterPro" id="IPR000760">
    <property type="entry name" value="Inositol_monophosphatase-like"/>
</dbReference>
<dbReference type="NCBIfam" id="TIGR01330">
    <property type="entry name" value="bisphos_HAL2"/>
    <property type="match status" value="1"/>
</dbReference>
<dbReference type="PANTHER" id="PTHR43200">
    <property type="entry name" value="PHOSPHATASE"/>
    <property type="match status" value="1"/>
</dbReference>
<dbReference type="PANTHER" id="PTHR43200:SF12">
    <property type="entry name" value="SAL3 PHOSPHATASE-RELATED"/>
    <property type="match status" value="1"/>
</dbReference>
<dbReference type="Pfam" id="PF00459">
    <property type="entry name" value="Inositol_P"/>
    <property type="match status" value="1"/>
</dbReference>
<dbReference type="SUPFAM" id="SSF56655">
    <property type="entry name" value="Carbohydrate phosphatase"/>
    <property type="match status" value="1"/>
</dbReference>
<keyword id="KW-0025">Alternative splicing</keyword>
<keyword id="KW-0378">Hydrolase</keyword>
<keyword id="KW-0460">Magnesium</keyword>
<keyword id="KW-0479">Metal-binding</keyword>
<keyword id="KW-0511">Multifunctional enzyme</keyword>
<keyword id="KW-1185">Reference proteome</keyword>
<protein>
    <recommendedName>
        <fullName>Probable 3'(2'),5'-bisphosphate nucleotidase 3</fullName>
        <ecNumber evidence="2">3.1.3.7</ecNumber>
    </recommendedName>
    <alternativeName>
        <fullName>3'(2'),5'-bisphosphonucleoside 3'(2')-phosphohydrolase 3</fullName>
    </alternativeName>
    <alternativeName>
        <fullName>DPNPase 3</fullName>
    </alternativeName>
    <alternativeName>
        <fullName>Inositol polyphosphate 1-phosphatase 3</fullName>
        <shortName>IPPase 3</shortName>
    </alternativeName>
    <alternativeName>
        <fullName>Inositol-1,4-bisphosphate 1-phosphatase 3</fullName>
        <ecNumber evidence="2">3.1.3.57</ecNumber>
    </alternativeName>
    <alternativeName>
        <fullName>Phosphatase SAL3</fullName>
    </alternativeName>
</protein>
<feature type="chain" id="PRO_0000142532" description="Probable 3'(2'),5'-bisphosphate nucleotidase 3">
    <location>
        <begin position="1"/>
        <end position="357"/>
    </location>
</feature>
<feature type="active site" description="Proton acceptor" evidence="1">
    <location>
        <position position="46"/>
    </location>
</feature>
<feature type="active site" description="Proton acceptor" evidence="1">
    <location>
        <position position="140"/>
    </location>
</feature>
<feature type="binding site" evidence="1">
    <location>
        <position position="71"/>
    </location>
    <ligand>
        <name>Mg(2+)</name>
        <dbReference type="ChEBI" id="CHEBI:18420"/>
        <label>1</label>
    </ligand>
</feature>
<feature type="binding site" evidence="1">
    <location>
        <position position="71"/>
    </location>
    <ligand>
        <name>Mg(2+)</name>
        <dbReference type="ChEBI" id="CHEBI:18420"/>
        <label>3</label>
    </ligand>
</feature>
<feature type="binding site" evidence="1">
    <location>
        <position position="135"/>
    </location>
    <ligand>
        <name>Mg(2+)</name>
        <dbReference type="ChEBI" id="CHEBI:18420"/>
        <label>1</label>
    </ligand>
</feature>
<feature type="binding site" evidence="1">
    <location>
        <position position="135"/>
    </location>
    <ligand>
        <name>Mg(2+)</name>
        <dbReference type="ChEBI" id="CHEBI:18420"/>
        <label>2</label>
    </ligand>
</feature>
<feature type="binding site" evidence="1">
    <location>
        <position position="137"/>
    </location>
    <ligand>
        <name>Mg(2+)</name>
        <dbReference type="ChEBI" id="CHEBI:18420"/>
        <label>1</label>
    </ligand>
</feature>
<feature type="binding site" evidence="1">
    <location>
        <position position="140"/>
    </location>
    <ligand>
        <name>adenosine 3',5'-bisphosphate</name>
        <dbReference type="ChEBI" id="CHEBI:58343"/>
    </ligand>
</feature>
<feature type="binding site" evidence="1">
    <location>
        <position position="256"/>
    </location>
    <ligand>
        <name>adenosine 3',5'-bisphosphate</name>
        <dbReference type="ChEBI" id="CHEBI:58343"/>
    </ligand>
</feature>
<feature type="binding site" evidence="1">
    <location>
        <position position="256"/>
    </location>
    <ligand>
        <name>AMP</name>
        <dbReference type="ChEBI" id="CHEBI:456215"/>
    </ligand>
</feature>
<feature type="binding site" evidence="1">
    <location>
        <position position="259"/>
    </location>
    <ligand>
        <name>adenosine 3',5'-bisphosphate</name>
        <dbReference type="ChEBI" id="CHEBI:58343"/>
    </ligand>
</feature>
<feature type="binding site" evidence="1">
    <location>
        <position position="259"/>
    </location>
    <ligand>
        <name>AMP</name>
        <dbReference type="ChEBI" id="CHEBI:456215"/>
    </ligand>
</feature>
<feature type="binding site" evidence="1">
    <location>
        <position position="273"/>
    </location>
    <ligand>
        <name>adenosine 3',5'-bisphosphate</name>
        <dbReference type="ChEBI" id="CHEBI:58343"/>
    </ligand>
</feature>
<feature type="binding site" evidence="1">
    <location>
        <position position="273"/>
    </location>
    <ligand>
        <name>AMP</name>
        <dbReference type="ChEBI" id="CHEBI:456215"/>
    </ligand>
</feature>
<feature type="sequence conflict" description="In Ref. 5; AAM67202." evidence="3" ref="5">
    <original>A</original>
    <variation>V</variation>
    <location>
        <position position="212"/>
    </location>
</feature>
<feature type="sequence conflict" description="In Ref. 5; AAM67202." evidence="3" ref="5">
    <original>D</original>
    <variation>Y</variation>
    <location>
        <position position="220"/>
    </location>
</feature>
<sequence>MSYDEMLSAAKKAVSLAARLSNEVRKSLLVTDVWNKSDDSPVTVADYGSQAVVSLVLERELQNEPVSLVAEEDSGELRKIAAETVLARITELVKDTLASDESYAIASPLTSDDVLNAIDRGKSEGGPKGRHWILDPIGGTRGFIRGEQYAIGLALLVEGKVVLGVMACPKLPLASTAGNALKSLPEKVGCLFYGSVGNGTYVQSLSVDSLPAKVEVSSIDDPAKASFFESYHTPVPIHNTIATKLGIKESPIKINSQTKYAALSRGDGEVYLRFTRKARPESIWNHAAGSIIVSEAGGKVTDAAGNPLDFSKGKYLDYKRGIVVTTQKLLPRLLTAVRESIKEEEEEEEKAASLKLH</sequence>
<organism>
    <name type="scientific">Arabidopsis thaliana</name>
    <name type="common">Mouse-ear cress</name>
    <dbReference type="NCBI Taxonomy" id="3702"/>
    <lineage>
        <taxon>Eukaryota</taxon>
        <taxon>Viridiplantae</taxon>
        <taxon>Streptophyta</taxon>
        <taxon>Embryophyta</taxon>
        <taxon>Tracheophyta</taxon>
        <taxon>Spermatophyta</taxon>
        <taxon>Magnoliopsida</taxon>
        <taxon>eudicotyledons</taxon>
        <taxon>Gunneridae</taxon>
        <taxon>Pentapetalae</taxon>
        <taxon>rosids</taxon>
        <taxon>malvids</taxon>
        <taxon>Brassicales</taxon>
        <taxon>Brassicaceae</taxon>
        <taxon>Camelineae</taxon>
        <taxon>Arabidopsis</taxon>
    </lineage>
</organism>
<name>DPNP3_ARATH</name>
<gene>
    <name type="primary">SAL3</name>
    <name type="ordered locus">At5g63990</name>
    <name type="ORF">MBM17.9</name>
</gene>
<comment type="function">
    <text evidence="2">Phosphatase that converts adenosine 3'-phosphate 5'-phosphosulfate (PAPS) to adenosine 5'-phosphosulfate (APS) and 3'(2')-phosphoadenosine 5'-phosphate (PAP) to AMP. Is also able to hydrolyze inositol 1,4-bisphosphate and inositol 1,3,4-trisphosphate.</text>
</comment>
<comment type="catalytic activity">
    <reaction evidence="2">
        <text>3'-phosphoadenylyl sulfate + H2O = adenosine 5'-phosphosulfate + phosphate</text>
        <dbReference type="Rhea" id="RHEA:77639"/>
        <dbReference type="ChEBI" id="CHEBI:15377"/>
        <dbReference type="ChEBI" id="CHEBI:43474"/>
        <dbReference type="ChEBI" id="CHEBI:58243"/>
        <dbReference type="ChEBI" id="CHEBI:58339"/>
        <dbReference type="EC" id="3.1.3.7"/>
    </reaction>
    <physiologicalReaction direction="left-to-right" evidence="2">
        <dbReference type="Rhea" id="RHEA:77640"/>
    </physiologicalReaction>
</comment>
<comment type="catalytic activity">
    <reaction evidence="2">
        <text>adenosine 3',5'-bisphosphate + H2O = AMP + phosphate</text>
        <dbReference type="Rhea" id="RHEA:10040"/>
        <dbReference type="ChEBI" id="CHEBI:15377"/>
        <dbReference type="ChEBI" id="CHEBI:43474"/>
        <dbReference type="ChEBI" id="CHEBI:58343"/>
        <dbReference type="ChEBI" id="CHEBI:456215"/>
        <dbReference type="EC" id="3.1.3.7"/>
    </reaction>
    <physiologicalReaction direction="left-to-right" evidence="2">
        <dbReference type="Rhea" id="RHEA:10041"/>
    </physiologicalReaction>
</comment>
<comment type="catalytic activity">
    <reaction evidence="2">
        <text>adenosine 2',5'-bisphosphate + H2O = AMP + phosphate</text>
        <dbReference type="Rhea" id="RHEA:77643"/>
        <dbReference type="ChEBI" id="CHEBI:15377"/>
        <dbReference type="ChEBI" id="CHEBI:43474"/>
        <dbReference type="ChEBI" id="CHEBI:194156"/>
        <dbReference type="ChEBI" id="CHEBI:456215"/>
        <dbReference type="EC" id="3.1.3.7"/>
    </reaction>
    <physiologicalReaction direction="left-to-right" evidence="2">
        <dbReference type="Rhea" id="RHEA:77644"/>
    </physiologicalReaction>
</comment>
<comment type="catalytic activity">
    <reaction evidence="2">
        <text>1D-myo-inositol 1,4-bisphosphate + H2O = 1D-myo-inositol 4-phosphate + phosphate</text>
        <dbReference type="Rhea" id="RHEA:15553"/>
        <dbReference type="ChEBI" id="CHEBI:15377"/>
        <dbReference type="ChEBI" id="CHEBI:43474"/>
        <dbReference type="ChEBI" id="CHEBI:58282"/>
        <dbReference type="ChEBI" id="CHEBI:58469"/>
        <dbReference type="EC" id="3.1.3.57"/>
    </reaction>
    <physiologicalReaction direction="left-to-right" evidence="2">
        <dbReference type="Rhea" id="RHEA:15554"/>
    </physiologicalReaction>
</comment>
<comment type="catalytic activity">
    <reaction evidence="2">
        <text>1D-myo-inositol 1,3,4-trisphosphate + H2O = 1D-myo-inositol 3,4-bisphosphate + phosphate</text>
        <dbReference type="Rhea" id="RHEA:70319"/>
        <dbReference type="ChEBI" id="CHEBI:15377"/>
        <dbReference type="ChEBI" id="CHEBI:43474"/>
        <dbReference type="ChEBI" id="CHEBI:58414"/>
        <dbReference type="ChEBI" id="CHEBI:83241"/>
    </reaction>
    <physiologicalReaction direction="left-to-right" evidence="2">
        <dbReference type="Rhea" id="RHEA:70320"/>
    </physiologicalReaction>
</comment>
<comment type="cofactor">
    <cofactor evidence="2">
        <name>Mg(2+)</name>
        <dbReference type="ChEBI" id="CHEBI:18420"/>
    </cofactor>
</comment>
<comment type="pathway">
    <text>Signal transduction; phosphatidylinositol signaling pathway.</text>
</comment>
<comment type="alternative products">
    <event type="alternative splicing"/>
    <isoform>
        <id>Q8GY63-1</id>
        <name>1</name>
        <sequence type="displayed"/>
    </isoform>
    <text>A number of isoforms are produced. According to EST sequences.</text>
</comment>
<comment type="similarity">
    <text evidence="3">Belongs to the inositol monophosphatase superfamily.</text>
</comment>
<comment type="sequence caution" evidence="3">
    <conflict type="erroneous gene model prediction">
        <sequence resource="EMBL-CDS" id="BAA96902"/>
    </conflict>
</comment>
<proteinExistence type="evidence at transcript level"/>
<accession>Q8GY63</accession>
<accession>Q8L8N7</accession>
<accession>Q9LVN5</accession>